<accession>B7N8V7</accession>
<reference key="1">
    <citation type="journal article" date="2009" name="PLoS Genet.">
        <title>Organised genome dynamics in the Escherichia coli species results in highly diverse adaptive paths.</title>
        <authorList>
            <person name="Touchon M."/>
            <person name="Hoede C."/>
            <person name="Tenaillon O."/>
            <person name="Barbe V."/>
            <person name="Baeriswyl S."/>
            <person name="Bidet P."/>
            <person name="Bingen E."/>
            <person name="Bonacorsi S."/>
            <person name="Bouchier C."/>
            <person name="Bouvet O."/>
            <person name="Calteau A."/>
            <person name="Chiapello H."/>
            <person name="Clermont O."/>
            <person name="Cruveiller S."/>
            <person name="Danchin A."/>
            <person name="Diard M."/>
            <person name="Dossat C."/>
            <person name="Karoui M.E."/>
            <person name="Frapy E."/>
            <person name="Garry L."/>
            <person name="Ghigo J.M."/>
            <person name="Gilles A.M."/>
            <person name="Johnson J."/>
            <person name="Le Bouguenec C."/>
            <person name="Lescat M."/>
            <person name="Mangenot S."/>
            <person name="Martinez-Jehanne V."/>
            <person name="Matic I."/>
            <person name="Nassif X."/>
            <person name="Oztas S."/>
            <person name="Petit M.A."/>
            <person name="Pichon C."/>
            <person name="Rouy Z."/>
            <person name="Ruf C.S."/>
            <person name="Schneider D."/>
            <person name="Tourret J."/>
            <person name="Vacherie B."/>
            <person name="Vallenet D."/>
            <person name="Medigue C."/>
            <person name="Rocha E.P.C."/>
            <person name="Denamur E."/>
        </authorList>
    </citation>
    <scope>NUCLEOTIDE SEQUENCE [LARGE SCALE GENOMIC DNA]</scope>
    <source>
        <strain>UMN026 / ExPEC</strain>
    </source>
</reference>
<feature type="chain" id="PRO_1000117532" description="S-adenosylmethionine:tRNA ribosyltransferase-isomerase">
    <location>
        <begin position="1"/>
        <end position="356"/>
    </location>
</feature>
<name>QUEA_ECOLU</name>
<keyword id="KW-0963">Cytoplasm</keyword>
<keyword id="KW-0671">Queuosine biosynthesis</keyword>
<keyword id="KW-0949">S-adenosyl-L-methionine</keyword>
<keyword id="KW-0808">Transferase</keyword>
<gene>
    <name evidence="1" type="primary">queA</name>
    <name type="ordered locus">ECUMN_0443</name>
</gene>
<sequence length="356" mass="39417">MRVTDFSFELPESLIAHYPMPERSSCRLLSLDGPTGALTHGTFTDLLDKLNPGDLLVFNNTRVIPARLFGRKASGGKIEVLVERMLDDKRILAHIRASKAPKPGAELLLGDDESINATMTARHGALFEVEFNDDRSVLDILNSIGHMPLPPYIDRPDEDADRELYQTVYSEKPGAVAAPTAGLHFDEPLLEKLRAKGVEMAFVTLHVGAGTFQPVRVDTIEDHIMHSEYAEVPQDVVDAVLAAKARGNRVIAVGTTSVRSLESAAQAAKNDLIEPFFDDTQIFIYPGFQYKVVDALVTNFHLPESTLIMLVSAFAGYQHTMNAYKAAVEEKYRFFSYGDAMFITYNPQAINERVGE</sequence>
<organism>
    <name type="scientific">Escherichia coli O17:K52:H18 (strain UMN026 / ExPEC)</name>
    <dbReference type="NCBI Taxonomy" id="585056"/>
    <lineage>
        <taxon>Bacteria</taxon>
        <taxon>Pseudomonadati</taxon>
        <taxon>Pseudomonadota</taxon>
        <taxon>Gammaproteobacteria</taxon>
        <taxon>Enterobacterales</taxon>
        <taxon>Enterobacteriaceae</taxon>
        <taxon>Escherichia</taxon>
    </lineage>
</organism>
<protein>
    <recommendedName>
        <fullName evidence="1">S-adenosylmethionine:tRNA ribosyltransferase-isomerase</fullName>
        <ecNumber evidence="1">2.4.99.17</ecNumber>
    </recommendedName>
    <alternativeName>
        <fullName evidence="1">Queuosine biosynthesis protein QueA</fullName>
    </alternativeName>
</protein>
<dbReference type="EC" id="2.4.99.17" evidence="1"/>
<dbReference type="EMBL" id="CU928163">
    <property type="protein sequence ID" value="CAR11658.1"/>
    <property type="molecule type" value="Genomic_DNA"/>
</dbReference>
<dbReference type="RefSeq" id="WP_001266492.1">
    <property type="nucleotide sequence ID" value="NC_011751.1"/>
</dbReference>
<dbReference type="RefSeq" id="YP_002411206.1">
    <property type="nucleotide sequence ID" value="NC_011751.1"/>
</dbReference>
<dbReference type="SMR" id="B7N8V7"/>
<dbReference type="STRING" id="585056.ECUMN_0443"/>
<dbReference type="GeneID" id="75170422"/>
<dbReference type="KEGG" id="eum:ECUMN_0443"/>
<dbReference type="PATRIC" id="fig|585056.7.peg.646"/>
<dbReference type="HOGENOM" id="CLU_039110_1_0_6"/>
<dbReference type="UniPathway" id="UPA00392"/>
<dbReference type="Proteomes" id="UP000007097">
    <property type="component" value="Chromosome"/>
</dbReference>
<dbReference type="GO" id="GO:0005737">
    <property type="term" value="C:cytoplasm"/>
    <property type="evidence" value="ECO:0007669"/>
    <property type="project" value="UniProtKB-SubCell"/>
</dbReference>
<dbReference type="GO" id="GO:0051075">
    <property type="term" value="F:S-adenosylmethionine:tRNA ribosyltransferase-isomerase activity"/>
    <property type="evidence" value="ECO:0007669"/>
    <property type="project" value="UniProtKB-EC"/>
</dbReference>
<dbReference type="GO" id="GO:0008616">
    <property type="term" value="P:queuosine biosynthetic process"/>
    <property type="evidence" value="ECO:0007669"/>
    <property type="project" value="UniProtKB-UniRule"/>
</dbReference>
<dbReference type="GO" id="GO:0002099">
    <property type="term" value="P:tRNA wobble guanine modification"/>
    <property type="evidence" value="ECO:0007669"/>
    <property type="project" value="TreeGrafter"/>
</dbReference>
<dbReference type="FunFam" id="2.40.10.240:FF:000001">
    <property type="entry name" value="S-adenosylmethionine:tRNA ribosyltransferase-isomerase"/>
    <property type="match status" value="1"/>
</dbReference>
<dbReference type="FunFam" id="3.40.1780.10:FF:000001">
    <property type="entry name" value="S-adenosylmethionine:tRNA ribosyltransferase-isomerase"/>
    <property type="match status" value="1"/>
</dbReference>
<dbReference type="Gene3D" id="2.40.10.240">
    <property type="entry name" value="QueA-like"/>
    <property type="match status" value="1"/>
</dbReference>
<dbReference type="Gene3D" id="3.40.1780.10">
    <property type="entry name" value="QueA-like"/>
    <property type="match status" value="1"/>
</dbReference>
<dbReference type="HAMAP" id="MF_00113">
    <property type="entry name" value="QueA"/>
    <property type="match status" value="1"/>
</dbReference>
<dbReference type="InterPro" id="IPR003699">
    <property type="entry name" value="QueA"/>
</dbReference>
<dbReference type="InterPro" id="IPR042118">
    <property type="entry name" value="QueA_dom1"/>
</dbReference>
<dbReference type="InterPro" id="IPR042119">
    <property type="entry name" value="QueA_dom2"/>
</dbReference>
<dbReference type="InterPro" id="IPR036100">
    <property type="entry name" value="QueA_sf"/>
</dbReference>
<dbReference type="NCBIfam" id="NF001140">
    <property type="entry name" value="PRK00147.1"/>
    <property type="match status" value="1"/>
</dbReference>
<dbReference type="NCBIfam" id="TIGR00113">
    <property type="entry name" value="queA"/>
    <property type="match status" value="1"/>
</dbReference>
<dbReference type="PANTHER" id="PTHR30307">
    <property type="entry name" value="S-ADENOSYLMETHIONINE:TRNA RIBOSYLTRANSFERASE-ISOMERASE"/>
    <property type="match status" value="1"/>
</dbReference>
<dbReference type="PANTHER" id="PTHR30307:SF0">
    <property type="entry name" value="S-ADENOSYLMETHIONINE:TRNA RIBOSYLTRANSFERASE-ISOMERASE"/>
    <property type="match status" value="1"/>
</dbReference>
<dbReference type="Pfam" id="PF02547">
    <property type="entry name" value="Queuosine_synth"/>
    <property type="match status" value="1"/>
</dbReference>
<dbReference type="SUPFAM" id="SSF111337">
    <property type="entry name" value="QueA-like"/>
    <property type="match status" value="1"/>
</dbReference>
<evidence type="ECO:0000255" key="1">
    <source>
        <dbReference type="HAMAP-Rule" id="MF_00113"/>
    </source>
</evidence>
<proteinExistence type="inferred from homology"/>
<comment type="function">
    <text evidence="1">Transfers and isomerizes the ribose moiety from AdoMet to the 7-aminomethyl group of 7-deazaguanine (preQ1-tRNA) to give epoxyqueuosine (oQ-tRNA).</text>
</comment>
<comment type="catalytic activity">
    <reaction evidence="1">
        <text>7-aminomethyl-7-carbaguanosine(34) in tRNA + S-adenosyl-L-methionine = epoxyqueuosine(34) in tRNA + adenine + L-methionine + 2 H(+)</text>
        <dbReference type="Rhea" id="RHEA:32155"/>
        <dbReference type="Rhea" id="RHEA-COMP:10342"/>
        <dbReference type="Rhea" id="RHEA-COMP:18582"/>
        <dbReference type="ChEBI" id="CHEBI:15378"/>
        <dbReference type="ChEBI" id="CHEBI:16708"/>
        <dbReference type="ChEBI" id="CHEBI:57844"/>
        <dbReference type="ChEBI" id="CHEBI:59789"/>
        <dbReference type="ChEBI" id="CHEBI:82833"/>
        <dbReference type="ChEBI" id="CHEBI:194443"/>
        <dbReference type="EC" id="2.4.99.17"/>
    </reaction>
</comment>
<comment type="pathway">
    <text evidence="1">tRNA modification; tRNA-queuosine biosynthesis.</text>
</comment>
<comment type="subunit">
    <text evidence="1">Monomer.</text>
</comment>
<comment type="subcellular location">
    <subcellularLocation>
        <location evidence="1">Cytoplasm</location>
    </subcellularLocation>
</comment>
<comment type="similarity">
    <text evidence="1">Belongs to the QueA family.</text>
</comment>